<gene>
    <name evidence="1" type="primary">mtnN</name>
    <name type="ordered locus">SF0151</name>
    <name type="ordered locus">S0154</name>
</gene>
<sequence>MKIGIIGAMEEEVTLLRDKIENRQTISLGGCEIYTGQLNGTEVALLKSGIGKVAAALGATLLLEHCKPDVIINTGSAGGLAPTLKVGDIVVSDEARYHDADVTAFGYEYGQLPGCPAGFKADDKLIAAAEACIAELNLNAVRGLIVSGDAFINGSVGLAKIRHNFPQAIAVEMEATAIAHVCHNFNVPFVVVRAISDVADQQSHLSFDEFLAVAAKQSSLMVESLVQKLAHG</sequence>
<accession>P0AF15</accession>
<accession>P24247</accession>
<feature type="chain" id="PRO_0000164449" description="5'-methylthioadenosine/S-adenosylhomocysteine nucleosidase">
    <location>
        <begin position="1"/>
        <end position="232"/>
    </location>
</feature>
<feature type="active site" description="Proton acceptor" evidence="1">
    <location>
        <position position="12"/>
    </location>
</feature>
<feature type="active site" description="Proton donor" evidence="1">
    <location>
        <position position="197"/>
    </location>
</feature>
<feature type="binding site" evidence="1">
    <location>
        <position position="78"/>
    </location>
    <ligand>
        <name>substrate</name>
    </ligand>
</feature>
<feature type="binding site" evidence="1">
    <location>
        <position position="152"/>
    </location>
    <ligand>
        <name>substrate</name>
    </ligand>
</feature>
<feature type="binding site" evidence="1">
    <location>
        <begin position="173"/>
        <end position="174"/>
    </location>
    <ligand>
        <name>substrate</name>
    </ligand>
</feature>
<proteinExistence type="inferred from homology"/>
<dbReference type="EC" id="3.2.2.9" evidence="1"/>
<dbReference type="EMBL" id="AE005674">
    <property type="protein sequence ID" value="AAN41814.1"/>
    <property type="molecule type" value="Genomic_DNA"/>
</dbReference>
<dbReference type="EMBL" id="AE014073">
    <property type="protein sequence ID" value="AAP15695.1"/>
    <property type="molecule type" value="Genomic_DNA"/>
</dbReference>
<dbReference type="RefSeq" id="WP_000689844.1">
    <property type="nucleotide sequence ID" value="NZ_WPGW01000006.1"/>
</dbReference>
<dbReference type="SMR" id="P0AF15"/>
<dbReference type="STRING" id="198214.SF0151"/>
<dbReference type="PaxDb" id="198214-SF0151"/>
<dbReference type="GeneID" id="93777267"/>
<dbReference type="KEGG" id="sfl:SF0151"/>
<dbReference type="KEGG" id="sfx:S0154"/>
<dbReference type="PATRIC" id="fig|198214.7.peg.169"/>
<dbReference type="HOGENOM" id="CLU_031248_2_2_6"/>
<dbReference type="UniPathway" id="UPA00904">
    <property type="reaction ID" value="UER00871"/>
</dbReference>
<dbReference type="Proteomes" id="UP000001006">
    <property type="component" value="Chromosome"/>
</dbReference>
<dbReference type="Proteomes" id="UP000002673">
    <property type="component" value="Chromosome"/>
</dbReference>
<dbReference type="GO" id="GO:0005829">
    <property type="term" value="C:cytosol"/>
    <property type="evidence" value="ECO:0007669"/>
    <property type="project" value="TreeGrafter"/>
</dbReference>
<dbReference type="GO" id="GO:0008782">
    <property type="term" value="F:adenosylhomocysteine nucleosidase activity"/>
    <property type="evidence" value="ECO:0007669"/>
    <property type="project" value="UniProtKB-UniRule"/>
</dbReference>
<dbReference type="GO" id="GO:0008930">
    <property type="term" value="F:methylthioadenosine nucleosidase activity"/>
    <property type="evidence" value="ECO:0007669"/>
    <property type="project" value="UniProtKB-UniRule"/>
</dbReference>
<dbReference type="GO" id="GO:0019509">
    <property type="term" value="P:L-methionine salvage from methylthioadenosine"/>
    <property type="evidence" value="ECO:0007669"/>
    <property type="project" value="UniProtKB-UniRule"/>
</dbReference>
<dbReference type="GO" id="GO:0019284">
    <property type="term" value="P:L-methionine salvage from S-adenosylmethionine"/>
    <property type="evidence" value="ECO:0007669"/>
    <property type="project" value="TreeGrafter"/>
</dbReference>
<dbReference type="GO" id="GO:0046124">
    <property type="term" value="P:purine deoxyribonucleoside catabolic process"/>
    <property type="evidence" value="ECO:0007669"/>
    <property type="project" value="UniProtKB-UniRule"/>
</dbReference>
<dbReference type="CDD" id="cd09008">
    <property type="entry name" value="MTAN"/>
    <property type="match status" value="1"/>
</dbReference>
<dbReference type="FunFam" id="3.40.50.1580:FF:000001">
    <property type="entry name" value="MTA/SAH nucleosidase family protein"/>
    <property type="match status" value="1"/>
</dbReference>
<dbReference type="Gene3D" id="3.40.50.1580">
    <property type="entry name" value="Nucleoside phosphorylase domain"/>
    <property type="match status" value="1"/>
</dbReference>
<dbReference type="HAMAP" id="MF_01684">
    <property type="entry name" value="Salvage_MtnN"/>
    <property type="match status" value="1"/>
</dbReference>
<dbReference type="InterPro" id="IPR010049">
    <property type="entry name" value="MTA_SAH_Nsdase"/>
</dbReference>
<dbReference type="InterPro" id="IPR000845">
    <property type="entry name" value="Nucleoside_phosphorylase_d"/>
</dbReference>
<dbReference type="InterPro" id="IPR035994">
    <property type="entry name" value="Nucleoside_phosphorylase_sf"/>
</dbReference>
<dbReference type="NCBIfam" id="TIGR01704">
    <property type="entry name" value="MTA_SAH-Nsdase"/>
    <property type="match status" value="1"/>
</dbReference>
<dbReference type="NCBIfam" id="NF004079">
    <property type="entry name" value="PRK05584.1"/>
    <property type="match status" value="1"/>
</dbReference>
<dbReference type="PANTHER" id="PTHR46832">
    <property type="entry name" value="5'-METHYLTHIOADENOSINE/S-ADENOSYLHOMOCYSTEINE NUCLEOSIDASE"/>
    <property type="match status" value="1"/>
</dbReference>
<dbReference type="PANTHER" id="PTHR46832:SF1">
    <property type="entry name" value="5'-METHYLTHIOADENOSINE_S-ADENOSYLHOMOCYSTEINE NUCLEOSIDASE"/>
    <property type="match status" value="1"/>
</dbReference>
<dbReference type="Pfam" id="PF01048">
    <property type="entry name" value="PNP_UDP_1"/>
    <property type="match status" value="1"/>
</dbReference>
<dbReference type="SUPFAM" id="SSF53167">
    <property type="entry name" value="Purine and uridine phosphorylases"/>
    <property type="match status" value="1"/>
</dbReference>
<evidence type="ECO:0000255" key="1">
    <source>
        <dbReference type="HAMAP-Rule" id="MF_01684"/>
    </source>
</evidence>
<reference key="1">
    <citation type="journal article" date="2002" name="Nucleic Acids Res.">
        <title>Genome sequence of Shigella flexneri 2a: insights into pathogenicity through comparison with genomes of Escherichia coli K12 and O157.</title>
        <authorList>
            <person name="Jin Q."/>
            <person name="Yuan Z."/>
            <person name="Xu J."/>
            <person name="Wang Y."/>
            <person name="Shen Y."/>
            <person name="Lu W."/>
            <person name="Wang J."/>
            <person name="Liu H."/>
            <person name="Yang J."/>
            <person name="Yang F."/>
            <person name="Zhang X."/>
            <person name="Zhang J."/>
            <person name="Yang G."/>
            <person name="Wu H."/>
            <person name="Qu D."/>
            <person name="Dong J."/>
            <person name="Sun L."/>
            <person name="Xue Y."/>
            <person name="Zhao A."/>
            <person name="Gao Y."/>
            <person name="Zhu J."/>
            <person name="Kan B."/>
            <person name="Ding K."/>
            <person name="Chen S."/>
            <person name="Cheng H."/>
            <person name="Yao Z."/>
            <person name="He B."/>
            <person name="Chen R."/>
            <person name="Ma D."/>
            <person name="Qiang B."/>
            <person name="Wen Y."/>
            <person name="Hou Y."/>
            <person name="Yu J."/>
        </authorList>
    </citation>
    <scope>NUCLEOTIDE SEQUENCE [LARGE SCALE GENOMIC DNA]</scope>
    <source>
        <strain>301 / Serotype 2a</strain>
    </source>
</reference>
<reference key="2">
    <citation type="journal article" date="2003" name="Infect. Immun.">
        <title>Complete genome sequence and comparative genomics of Shigella flexneri serotype 2a strain 2457T.</title>
        <authorList>
            <person name="Wei J."/>
            <person name="Goldberg M.B."/>
            <person name="Burland V."/>
            <person name="Venkatesan M.M."/>
            <person name="Deng W."/>
            <person name="Fournier G."/>
            <person name="Mayhew G.F."/>
            <person name="Plunkett G. III"/>
            <person name="Rose D.J."/>
            <person name="Darling A."/>
            <person name="Mau B."/>
            <person name="Perna N.T."/>
            <person name="Payne S.M."/>
            <person name="Runyen-Janecky L.J."/>
            <person name="Zhou S."/>
            <person name="Schwartz D.C."/>
            <person name="Blattner F.R."/>
        </authorList>
    </citation>
    <scope>NUCLEOTIDE SEQUENCE [LARGE SCALE GENOMIC DNA]</scope>
    <source>
        <strain>ATCC 700930 / 2457T / Serotype 2a</strain>
    </source>
</reference>
<protein>
    <recommendedName>
        <fullName evidence="1">5'-methylthioadenosine/S-adenosylhomocysteine nucleosidase</fullName>
        <shortName evidence="1">MTA/SAH nucleosidase</shortName>
        <shortName evidence="1">MTAN</shortName>
        <ecNumber evidence="1">3.2.2.9</ecNumber>
    </recommendedName>
    <alternativeName>
        <fullName evidence="1">5'-deoxyadenosine nucleosidase</fullName>
        <shortName evidence="1">DOA nucleosidase</shortName>
        <shortName evidence="1">dAdo nucleosidase</shortName>
    </alternativeName>
    <alternativeName>
        <fullName evidence="1">5'-methylthioadenosine nucleosidase</fullName>
        <shortName evidence="1">MTA nucleosidase</shortName>
    </alternativeName>
    <alternativeName>
        <fullName evidence="1">S-adenosylhomocysteine nucleosidase</fullName>
        <shortName evidence="1">AdoHcy nucleosidase</shortName>
        <shortName evidence="1">SAH nucleosidase</shortName>
        <shortName evidence="1">SRH nucleosidase</shortName>
    </alternativeName>
</protein>
<keyword id="KW-0028">Amino-acid biosynthesis</keyword>
<keyword id="KW-0378">Hydrolase</keyword>
<keyword id="KW-0486">Methionine biosynthesis</keyword>
<keyword id="KW-1185">Reference proteome</keyword>
<comment type="function">
    <text evidence="1">Catalyzes the irreversible cleavage of the glycosidic bond in both 5'-methylthioadenosine (MTA) and S-adenosylhomocysteine (SAH/AdoHcy) to adenine and the corresponding thioribose, 5'-methylthioribose and S-ribosylhomocysteine, respectively. Also cleaves 5'-deoxyadenosine, a toxic by-product of radical S-adenosylmethionine (SAM) enzymes, into 5-deoxyribose and adenine. Thus, is required for in vivo function of the radical SAM enzymes biotin synthase and lipoic acid synthase, that are inhibited by 5'-deoxyadenosine accumulation.</text>
</comment>
<comment type="catalytic activity">
    <reaction evidence="1">
        <text>S-adenosyl-L-homocysteine + H2O = S-(5-deoxy-D-ribos-5-yl)-L-homocysteine + adenine</text>
        <dbReference type="Rhea" id="RHEA:17805"/>
        <dbReference type="ChEBI" id="CHEBI:15377"/>
        <dbReference type="ChEBI" id="CHEBI:16708"/>
        <dbReference type="ChEBI" id="CHEBI:57856"/>
        <dbReference type="ChEBI" id="CHEBI:58195"/>
        <dbReference type="EC" id="3.2.2.9"/>
    </reaction>
</comment>
<comment type="catalytic activity">
    <reaction evidence="1">
        <text>S-methyl-5'-thioadenosine + H2O = 5-(methylsulfanyl)-D-ribose + adenine</text>
        <dbReference type="Rhea" id="RHEA:13617"/>
        <dbReference type="ChEBI" id="CHEBI:15377"/>
        <dbReference type="ChEBI" id="CHEBI:16708"/>
        <dbReference type="ChEBI" id="CHEBI:17509"/>
        <dbReference type="ChEBI" id="CHEBI:78440"/>
        <dbReference type="EC" id="3.2.2.9"/>
    </reaction>
</comment>
<comment type="catalytic activity">
    <reaction evidence="1">
        <text>5'-deoxyadenosine + H2O = 5-deoxy-D-ribose + adenine</text>
        <dbReference type="Rhea" id="RHEA:29859"/>
        <dbReference type="ChEBI" id="CHEBI:15377"/>
        <dbReference type="ChEBI" id="CHEBI:16708"/>
        <dbReference type="ChEBI" id="CHEBI:17319"/>
        <dbReference type="ChEBI" id="CHEBI:149540"/>
        <dbReference type="EC" id="3.2.2.9"/>
    </reaction>
    <physiologicalReaction direction="left-to-right" evidence="1">
        <dbReference type="Rhea" id="RHEA:29860"/>
    </physiologicalReaction>
</comment>
<comment type="pathway">
    <text evidence="1">Amino-acid biosynthesis; L-methionine biosynthesis via salvage pathway; S-methyl-5-thio-alpha-D-ribose 1-phosphate from S-methyl-5'-thioadenosine (hydrolase route): step 1/2.</text>
</comment>
<comment type="subunit">
    <text evidence="1">Homodimer.</text>
</comment>
<comment type="similarity">
    <text evidence="1">Belongs to the PNP/UDP phosphorylase family. MtnN subfamily.</text>
</comment>
<name>MTNN_SHIFL</name>
<organism>
    <name type="scientific">Shigella flexneri</name>
    <dbReference type="NCBI Taxonomy" id="623"/>
    <lineage>
        <taxon>Bacteria</taxon>
        <taxon>Pseudomonadati</taxon>
        <taxon>Pseudomonadota</taxon>
        <taxon>Gammaproteobacteria</taxon>
        <taxon>Enterobacterales</taxon>
        <taxon>Enterobacteriaceae</taxon>
        <taxon>Shigella</taxon>
    </lineage>
</organism>